<name>MTOX_ECO5E</name>
<accession>B5YVS9</accession>
<evidence type="ECO:0000255" key="1">
    <source>
        <dbReference type="HAMAP-Rule" id="MF_00515"/>
    </source>
</evidence>
<comment type="function">
    <text evidence="1">Catalyzes the oxidative demethylation of N-methyl-L-tryptophan.</text>
</comment>
<comment type="catalytic activity">
    <reaction evidence="1">
        <text>N(alpha)-methyl-L-tryptophan + O2 + H2O = L-tryptophan + formaldehyde + H2O2</text>
        <dbReference type="Rhea" id="RHEA:28006"/>
        <dbReference type="ChEBI" id="CHEBI:15377"/>
        <dbReference type="ChEBI" id="CHEBI:15379"/>
        <dbReference type="ChEBI" id="CHEBI:16240"/>
        <dbReference type="ChEBI" id="CHEBI:16842"/>
        <dbReference type="ChEBI" id="CHEBI:57283"/>
        <dbReference type="ChEBI" id="CHEBI:57912"/>
    </reaction>
</comment>
<comment type="cofactor">
    <cofactor evidence="1">
        <name>FAD</name>
        <dbReference type="ChEBI" id="CHEBI:57692"/>
    </cofactor>
    <text evidence="1">Binds 1 FAD per subunit.</text>
</comment>
<comment type="subunit">
    <text evidence="1">Monomer.</text>
</comment>
<comment type="similarity">
    <text evidence="1">Belongs to the MSOX/MTOX family. MTOX subfamily.</text>
</comment>
<organism>
    <name type="scientific">Escherichia coli O157:H7 (strain EC4115 / EHEC)</name>
    <dbReference type="NCBI Taxonomy" id="444450"/>
    <lineage>
        <taxon>Bacteria</taxon>
        <taxon>Pseudomonadati</taxon>
        <taxon>Pseudomonadota</taxon>
        <taxon>Gammaproteobacteria</taxon>
        <taxon>Enterobacterales</taxon>
        <taxon>Enterobacteriaceae</taxon>
        <taxon>Escherichia</taxon>
    </lineage>
</organism>
<proteinExistence type="inferred from homology"/>
<feature type="chain" id="PRO_1000127435" description="N-methyl-L-tryptophan oxidase">
    <location>
        <begin position="1"/>
        <end position="372"/>
    </location>
</feature>
<feature type="binding site" evidence="1">
    <location>
        <begin position="4"/>
        <end position="34"/>
    </location>
    <ligand>
        <name>FAD</name>
        <dbReference type="ChEBI" id="CHEBI:57692"/>
    </ligand>
</feature>
<feature type="modified residue" description="S-8alpha-FAD cysteine" evidence="1">
    <location>
        <position position="308"/>
    </location>
</feature>
<dbReference type="EC" id="1.5.3.-" evidence="1"/>
<dbReference type="EMBL" id="CP001164">
    <property type="protein sequence ID" value="ACI35731.1"/>
    <property type="molecule type" value="Genomic_DNA"/>
</dbReference>
<dbReference type="RefSeq" id="WP_000872798.1">
    <property type="nucleotide sequence ID" value="NC_011353.1"/>
</dbReference>
<dbReference type="SMR" id="B5YVS9"/>
<dbReference type="KEGG" id="ecf:ECH74115_1438"/>
<dbReference type="HOGENOM" id="CLU_007884_2_1_6"/>
<dbReference type="GO" id="GO:0005829">
    <property type="term" value="C:cytosol"/>
    <property type="evidence" value="ECO:0007669"/>
    <property type="project" value="TreeGrafter"/>
</dbReference>
<dbReference type="GO" id="GO:0050660">
    <property type="term" value="F:flavin adenine dinucleotide binding"/>
    <property type="evidence" value="ECO:0007669"/>
    <property type="project" value="InterPro"/>
</dbReference>
<dbReference type="GO" id="GO:0050131">
    <property type="term" value="F:N-methyl-L-amino-acid oxidase activity"/>
    <property type="evidence" value="ECO:0007669"/>
    <property type="project" value="InterPro"/>
</dbReference>
<dbReference type="GO" id="GO:0008115">
    <property type="term" value="F:sarcosine oxidase activity"/>
    <property type="evidence" value="ECO:0007669"/>
    <property type="project" value="TreeGrafter"/>
</dbReference>
<dbReference type="Gene3D" id="3.30.9.10">
    <property type="entry name" value="D-Amino Acid Oxidase, subunit A, domain 2"/>
    <property type="match status" value="1"/>
</dbReference>
<dbReference type="Gene3D" id="3.50.50.60">
    <property type="entry name" value="FAD/NAD(P)-binding domain"/>
    <property type="match status" value="1"/>
</dbReference>
<dbReference type="HAMAP" id="MF_00515">
    <property type="entry name" value="MTOX"/>
    <property type="match status" value="1"/>
</dbReference>
<dbReference type="InterPro" id="IPR006076">
    <property type="entry name" value="FAD-dep_OxRdtase"/>
</dbReference>
<dbReference type="InterPro" id="IPR036188">
    <property type="entry name" value="FAD/NAD-bd_sf"/>
</dbReference>
<dbReference type="InterPro" id="IPR023493">
    <property type="entry name" value="Me_Trp_Oxase_MTOX"/>
</dbReference>
<dbReference type="InterPro" id="IPR045170">
    <property type="entry name" value="MTOX"/>
</dbReference>
<dbReference type="NCBIfam" id="NF008425">
    <property type="entry name" value="PRK11259.1"/>
    <property type="match status" value="1"/>
</dbReference>
<dbReference type="PANTHER" id="PTHR10961:SF7">
    <property type="entry name" value="FAD DEPENDENT OXIDOREDUCTASE DOMAIN-CONTAINING PROTEIN"/>
    <property type="match status" value="1"/>
</dbReference>
<dbReference type="PANTHER" id="PTHR10961">
    <property type="entry name" value="PEROXISOMAL SARCOSINE OXIDASE"/>
    <property type="match status" value="1"/>
</dbReference>
<dbReference type="Pfam" id="PF01266">
    <property type="entry name" value="DAO"/>
    <property type="match status" value="1"/>
</dbReference>
<dbReference type="SUPFAM" id="SSF54373">
    <property type="entry name" value="FAD-linked reductases, C-terminal domain"/>
    <property type="match status" value="1"/>
</dbReference>
<dbReference type="SUPFAM" id="SSF51905">
    <property type="entry name" value="FAD/NAD(P)-binding domain"/>
    <property type="match status" value="1"/>
</dbReference>
<gene>
    <name evidence="1" type="primary">solA</name>
    <name type="ordered locus">ECH74115_1438</name>
</gene>
<reference key="1">
    <citation type="journal article" date="2011" name="Proc. Natl. Acad. Sci. U.S.A.">
        <title>Genomic anatomy of Escherichia coli O157:H7 outbreaks.</title>
        <authorList>
            <person name="Eppinger M."/>
            <person name="Mammel M.K."/>
            <person name="Leclerc J.E."/>
            <person name="Ravel J."/>
            <person name="Cebula T.A."/>
        </authorList>
    </citation>
    <scope>NUCLEOTIDE SEQUENCE [LARGE SCALE GENOMIC DNA]</scope>
    <source>
        <strain>EC4115 / EHEC</strain>
    </source>
</reference>
<protein>
    <recommendedName>
        <fullName evidence="1">N-methyl-L-tryptophan oxidase</fullName>
        <shortName evidence="1">MTOX</shortName>
        <ecNumber evidence="1">1.5.3.-</ecNumber>
    </recommendedName>
</protein>
<sequence length="372" mass="40803">MKYDLIIIGSGSVGAAAGYYATRAGLNVLMTDAHMPPHQHGSHHGDTRLIRHAYGEGEKYVPLVLRAQTLWDDLSRHNEDDPIFVRSGVINLGPADSAFLANVAHSAEQWQLNVEKLDAQGIMARWPEIRVPDNYIGLFETDSGFLRSELAIKTWIQLAKEAGCAQLFNCPVTAIRHDDDGVTIETADGEYQAKKAIVCAGTWVKDLLPELPVQPVRKVFAWYQADGRYSVKNKFPAFTGELPNGDQYYGFPAENDALKIGKHNGGQVIHSADERVPFAEVVSDGSEAFPFLRNVLPGIGCCLYGAACTYDNSPDEDFIIDTLPGHDNTLLITGLSGHGFKFASVLGEIAADFAQDKKSDFDLTPFSLSRFQ</sequence>
<keyword id="KW-0274">FAD</keyword>
<keyword id="KW-0285">Flavoprotein</keyword>
<keyword id="KW-0560">Oxidoreductase</keyword>